<keyword id="KW-0963">Cytoplasm</keyword>
<keyword id="KW-0274">FAD</keyword>
<keyword id="KW-0285">Flavoprotein</keyword>
<keyword id="KW-0520">NAD</keyword>
<keyword id="KW-1185">Reference proteome</keyword>
<keyword id="KW-0819">tRNA processing</keyword>
<reference key="1">
    <citation type="journal article" date="2001" name="Genome Res.">
        <title>The complete genome sequence of the lactic acid bacterium Lactococcus lactis ssp. lactis IL1403.</title>
        <authorList>
            <person name="Bolotin A."/>
            <person name="Wincker P."/>
            <person name="Mauger S."/>
            <person name="Jaillon O."/>
            <person name="Malarme K."/>
            <person name="Weissenbach J."/>
            <person name="Ehrlich S.D."/>
            <person name="Sorokin A."/>
        </authorList>
    </citation>
    <scope>NUCLEOTIDE SEQUENCE [LARGE SCALE GENOMIC DNA]</scope>
    <source>
        <strain>IL1403</strain>
    </source>
</reference>
<feature type="chain" id="PRO_0000117119" description="tRNA uridine 5-carboxymethylaminomethyl modification enzyme MnmG">
    <location>
        <begin position="1"/>
        <end position="625"/>
    </location>
</feature>
<feature type="binding site" evidence="1">
    <location>
        <begin position="13"/>
        <end position="18"/>
    </location>
    <ligand>
        <name>FAD</name>
        <dbReference type="ChEBI" id="CHEBI:57692"/>
    </ligand>
</feature>
<feature type="binding site" evidence="1">
    <location>
        <position position="125"/>
    </location>
    <ligand>
        <name>FAD</name>
        <dbReference type="ChEBI" id="CHEBI:57692"/>
    </ligand>
</feature>
<feature type="binding site" evidence="1">
    <location>
        <position position="182"/>
    </location>
    <ligand>
        <name>FAD</name>
        <dbReference type="ChEBI" id="CHEBI:57692"/>
    </ligand>
</feature>
<feature type="binding site" evidence="1">
    <location>
        <begin position="276"/>
        <end position="290"/>
    </location>
    <ligand>
        <name>NAD(+)</name>
        <dbReference type="ChEBI" id="CHEBI:57540"/>
    </ligand>
</feature>
<feature type="binding site" evidence="1">
    <location>
        <position position="373"/>
    </location>
    <ligand>
        <name>FAD</name>
        <dbReference type="ChEBI" id="CHEBI:57692"/>
    </ligand>
</feature>
<evidence type="ECO:0000255" key="1">
    <source>
        <dbReference type="HAMAP-Rule" id="MF_00129"/>
    </source>
</evidence>
<sequence length="625" mass="69377">MNFQENYDVVVIGGGHAGVEASLAAARMGSKTLLMTINLNMVAFMPCNPSIGGSAKGIVVREIDALGGEMGRNIDKTYIQMKMLNTGKGPAVRALRAQADKDEYADSMKNTVSDQENLTLRQGMVEELILDEEKKKVIGIKTSTGTKYGAKAVIITTGTALRGEIIIGELKYSSGPNNSLSSIGLADNLREIGFEIGRFKTGTPPRVLASSIDYDKTEIQPGDEAPNHFSFMSSDENYLKDQIPCWLTYTTENSHTILRGNLHRAPLFSGIVKGVGPRYCPSIEDKITRFADKPRHQLFLEPEGRNTEEVYIGGLSTSMPEDVQFDLVKSIPGLENAQMMRPGYAIEYDVVMPHQLRPTLETKLVSGLFTAGQTNGTSGYEEAAGQGLVAGINAALKVQGKSEFILKRSEAYIGVMIDDLVTKGTLEPYRLLTSRAEYRLILRHDNADRRLTEIGRQVGLVSDEQWEHYQAKMAQFDREMKRLNSEKLKPLPDTQEKLGKLGFGPIKDALTGAEFLKRPEVHYNEVIDFIGQAPEKIDRTVIELIETEITYEGYIKKAMDQVDKMHRLEAKRIPKNMDWDKLDSIATEARQKFKKINPETLGQASRISGVNPADISILMVYLEGK</sequence>
<proteinExistence type="inferred from homology"/>
<protein>
    <recommendedName>
        <fullName evidence="1">tRNA uridine 5-carboxymethylaminomethyl modification enzyme MnmG</fullName>
    </recommendedName>
    <alternativeName>
        <fullName evidence="1">Glucose-inhibited division protein A</fullName>
    </alternativeName>
</protein>
<dbReference type="EMBL" id="AE005176">
    <property type="protein sequence ID" value="AAK05945.1"/>
    <property type="molecule type" value="Genomic_DNA"/>
</dbReference>
<dbReference type="PIR" id="G86855">
    <property type="entry name" value="G86855"/>
</dbReference>
<dbReference type="RefSeq" id="NP_268004.1">
    <property type="nucleotide sequence ID" value="NC_002662.1"/>
</dbReference>
<dbReference type="RefSeq" id="WP_003132359.1">
    <property type="nucleotide sequence ID" value="NC_002662.1"/>
</dbReference>
<dbReference type="SMR" id="Q9CEJ4"/>
<dbReference type="PaxDb" id="272623-L97777"/>
<dbReference type="EnsemblBacteria" id="AAK05945">
    <property type="protein sequence ID" value="AAK05945"/>
    <property type="gene ID" value="L97777"/>
</dbReference>
<dbReference type="KEGG" id="lla:L97777"/>
<dbReference type="PATRIC" id="fig|272623.7.peg.1979"/>
<dbReference type="eggNOG" id="COG0445">
    <property type="taxonomic scope" value="Bacteria"/>
</dbReference>
<dbReference type="HOGENOM" id="CLU_007831_2_2_9"/>
<dbReference type="OrthoDB" id="9815560at2"/>
<dbReference type="Proteomes" id="UP000002196">
    <property type="component" value="Chromosome"/>
</dbReference>
<dbReference type="GO" id="GO:0005829">
    <property type="term" value="C:cytosol"/>
    <property type="evidence" value="ECO:0007669"/>
    <property type="project" value="TreeGrafter"/>
</dbReference>
<dbReference type="GO" id="GO:0050660">
    <property type="term" value="F:flavin adenine dinucleotide binding"/>
    <property type="evidence" value="ECO:0007669"/>
    <property type="project" value="UniProtKB-UniRule"/>
</dbReference>
<dbReference type="GO" id="GO:0030488">
    <property type="term" value="P:tRNA methylation"/>
    <property type="evidence" value="ECO:0007669"/>
    <property type="project" value="TreeGrafter"/>
</dbReference>
<dbReference type="GO" id="GO:0002098">
    <property type="term" value="P:tRNA wobble uridine modification"/>
    <property type="evidence" value="ECO:0007669"/>
    <property type="project" value="InterPro"/>
</dbReference>
<dbReference type="FunFam" id="1.10.10.1800:FF:000001">
    <property type="entry name" value="tRNA uridine 5-carboxymethylaminomethyl modification enzyme MnmG"/>
    <property type="match status" value="1"/>
</dbReference>
<dbReference type="FunFam" id="1.10.150.570:FF:000001">
    <property type="entry name" value="tRNA uridine 5-carboxymethylaminomethyl modification enzyme MnmG"/>
    <property type="match status" value="1"/>
</dbReference>
<dbReference type="FunFam" id="3.50.50.60:FF:000002">
    <property type="entry name" value="tRNA uridine 5-carboxymethylaminomethyl modification enzyme MnmG"/>
    <property type="match status" value="1"/>
</dbReference>
<dbReference type="FunFam" id="3.50.50.60:FF:000063">
    <property type="entry name" value="tRNA uridine 5-carboxymethylaminomethyl modification enzyme MnmG"/>
    <property type="match status" value="1"/>
</dbReference>
<dbReference type="Gene3D" id="3.50.50.60">
    <property type="entry name" value="FAD/NAD(P)-binding domain"/>
    <property type="match status" value="2"/>
</dbReference>
<dbReference type="Gene3D" id="1.10.150.570">
    <property type="entry name" value="GidA associated domain, C-terminal subdomain"/>
    <property type="match status" value="1"/>
</dbReference>
<dbReference type="Gene3D" id="1.10.10.1800">
    <property type="entry name" value="tRNA uridine 5-carboxymethylaminomethyl modification enzyme MnmG/GidA"/>
    <property type="match status" value="1"/>
</dbReference>
<dbReference type="HAMAP" id="MF_00129">
    <property type="entry name" value="MnmG_GidA"/>
    <property type="match status" value="1"/>
</dbReference>
<dbReference type="InterPro" id="IPR036188">
    <property type="entry name" value="FAD/NAD-bd_sf"/>
</dbReference>
<dbReference type="InterPro" id="IPR049312">
    <property type="entry name" value="GIDA_C_N"/>
</dbReference>
<dbReference type="InterPro" id="IPR004416">
    <property type="entry name" value="MnmG"/>
</dbReference>
<dbReference type="InterPro" id="IPR002218">
    <property type="entry name" value="MnmG-rel"/>
</dbReference>
<dbReference type="InterPro" id="IPR020595">
    <property type="entry name" value="MnmG-rel_CS"/>
</dbReference>
<dbReference type="InterPro" id="IPR026904">
    <property type="entry name" value="MnmG_C"/>
</dbReference>
<dbReference type="InterPro" id="IPR047001">
    <property type="entry name" value="MnmG_C_subdom"/>
</dbReference>
<dbReference type="InterPro" id="IPR044920">
    <property type="entry name" value="MnmG_C_subdom_sf"/>
</dbReference>
<dbReference type="InterPro" id="IPR040131">
    <property type="entry name" value="MnmG_N"/>
</dbReference>
<dbReference type="NCBIfam" id="TIGR00136">
    <property type="entry name" value="mnmG_gidA"/>
    <property type="match status" value="1"/>
</dbReference>
<dbReference type="PANTHER" id="PTHR11806">
    <property type="entry name" value="GLUCOSE INHIBITED DIVISION PROTEIN A"/>
    <property type="match status" value="1"/>
</dbReference>
<dbReference type="PANTHER" id="PTHR11806:SF0">
    <property type="entry name" value="PROTEIN MTO1 HOMOLOG, MITOCHONDRIAL"/>
    <property type="match status" value="1"/>
</dbReference>
<dbReference type="Pfam" id="PF01134">
    <property type="entry name" value="GIDA"/>
    <property type="match status" value="1"/>
</dbReference>
<dbReference type="Pfam" id="PF21680">
    <property type="entry name" value="GIDA_C_1st"/>
    <property type="match status" value="1"/>
</dbReference>
<dbReference type="Pfam" id="PF13932">
    <property type="entry name" value="SAM_GIDA_C"/>
    <property type="match status" value="1"/>
</dbReference>
<dbReference type="PRINTS" id="PR00368">
    <property type="entry name" value="FADPNR"/>
</dbReference>
<dbReference type="PRINTS" id="PR00411">
    <property type="entry name" value="PNDRDTASEI"/>
</dbReference>
<dbReference type="SMART" id="SM01228">
    <property type="entry name" value="GIDA_assoc_3"/>
    <property type="match status" value="1"/>
</dbReference>
<dbReference type="SUPFAM" id="SSF51905">
    <property type="entry name" value="FAD/NAD(P)-binding domain"/>
    <property type="match status" value="1"/>
</dbReference>
<dbReference type="PROSITE" id="PS01280">
    <property type="entry name" value="GIDA_1"/>
    <property type="match status" value="1"/>
</dbReference>
<dbReference type="PROSITE" id="PS01281">
    <property type="entry name" value="GIDA_2"/>
    <property type="match status" value="1"/>
</dbReference>
<organism>
    <name type="scientific">Lactococcus lactis subsp. lactis (strain IL1403)</name>
    <name type="common">Streptococcus lactis</name>
    <dbReference type="NCBI Taxonomy" id="272623"/>
    <lineage>
        <taxon>Bacteria</taxon>
        <taxon>Bacillati</taxon>
        <taxon>Bacillota</taxon>
        <taxon>Bacilli</taxon>
        <taxon>Lactobacillales</taxon>
        <taxon>Streptococcaceae</taxon>
        <taxon>Lactococcus</taxon>
    </lineage>
</organism>
<gene>
    <name evidence="1" type="primary">mnmG</name>
    <name evidence="1" type="synonym">gidA</name>
    <name type="ordered locus">LL1847</name>
    <name type="ORF">L97777</name>
</gene>
<name>MNMG_LACLA</name>
<accession>Q9CEJ4</accession>
<comment type="function">
    <text evidence="1">NAD-binding protein involved in the addition of a carboxymethylaminomethyl (cmnm) group at the wobble position (U34) of certain tRNAs, forming tRNA-cmnm(5)s(2)U34.</text>
</comment>
<comment type="cofactor">
    <cofactor evidence="1">
        <name>FAD</name>
        <dbReference type="ChEBI" id="CHEBI:57692"/>
    </cofactor>
</comment>
<comment type="subunit">
    <text evidence="1">Homodimer. Heterotetramer of two MnmE and two MnmG subunits.</text>
</comment>
<comment type="subcellular location">
    <subcellularLocation>
        <location evidence="1">Cytoplasm</location>
    </subcellularLocation>
</comment>
<comment type="similarity">
    <text evidence="1">Belongs to the MnmG family.</text>
</comment>